<comment type="subcellular location">
    <subcellularLocation>
        <location evidence="1">Cell inner membrane</location>
        <topology evidence="1">Multi-pass membrane protein</topology>
    </subcellularLocation>
</comment>
<comment type="similarity">
    <text evidence="1">Belongs to the PsiE family.</text>
</comment>
<accession>B7NFX5</accession>
<dbReference type="EMBL" id="CU928163">
    <property type="protein sequence ID" value="CAR15682.1"/>
    <property type="molecule type" value="Genomic_DNA"/>
</dbReference>
<dbReference type="RefSeq" id="WP_001309131.1">
    <property type="nucleotide sequence ID" value="NC_011751.1"/>
</dbReference>
<dbReference type="RefSeq" id="YP_002415172.1">
    <property type="nucleotide sequence ID" value="NC_011751.1"/>
</dbReference>
<dbReference type="SMR" id="B7NFX5"/>
<dbReference type="STRING" id="585056.ECUMN_4565"/>
<dbReference type="KEGG" id="eum:ECUMN_4565"/>
<dbReference type="PATRIC" id="fig|585056.7.peg.4728"/>
<dbReference type="HOGENOM" id="CLU_127561_0_1_6"/>
<dbReference type="Proteomes" id="UP000007097">
    <property type="component" value="Chromosome"/>
</dbReference>
<dbReference type="GO" id="GO:0005886">
    <property type="term" value="C:plasma membrane"/>
    <property type="evidence" value="ECO:0007669"/>
    <property type="project" value="UniProtKB-SubCell"/>
</dbReference>
<dbReference type="GO" id="GO:0016036">
    <property type="term" value="P:cellular response to phosphate starvation"/>
    <property type="evidence" value="ECO:0007669"/>
    <property type="project" value="InterPro"/>
</dbReference>
<dbReference type="HAMAP" id="MF_01048">
    <property type="entry name" value="PsiE"/>
    <property type="match status" value="1"/>
</dbReference>
<dbReference type="InterPro" id="IPR009315">
    <property type="entry name" value="P_starv_induced_PsiE"/>
</dbReference>
<dbReference type="InterPro" id="IPR020948">
    <property type="entry name" value="P_starv_induced_PsiE-like"/>
</dbReference>
<dbReference type="NCBIfam" id="NF002764">
    <property type="entry name" value="PRK02833.1-2"/>
    <property type="match status" value="1"/>
</dbReference>
<dbReference type="NCBIfam" id="NF002765">
    <property type="entry name" value="PRK02833.1-3"/>
    <property type="match status" value="1"/>
</dbReference>
<dbReference type="NCBIfam" id="NF002767">
    <property type="entry name" value="PRK02833.1-5"/>
    <property type="match status" value="1"/>
</dbReference>
<dbReference type="PANTHER" id="PTHR37819">
    <property type="entry name" value="PROTEIN PSIE"/>
    <property type="match status" value="1"/>
</dbReference>
<dbReference type="PANTHER" id="PTHR37819:SF1">
    <property type="entry name" value="PROTEIN PSIE"/>
    <property type="match status" value="1"/>
</dbReference>
<dbReference type="Pfam" id="PF06146">
    <property type="entry name" value="PsiE"/>
    <property type="match status" value="1"/>
</dbReference>
<dbReference type="PIRSF" id="PIRSF029598">
    <property type="entry name" value="PsiE"/>
    <property type="match status" value="1"/>
</dbReference>
<sequence>MTSLSRPCVEFISTILQTVLNLGLLCLGLILVVFLGKETVHLADVLFAPEQTSKYELVEGLVVYFLYFEFIALIVKYFQSGFHFPLRYFVYIGITAIVRLIIVDHKSPLDVLIYSAAILLLVITLWLCNSKRLKRE</sequence>
<keyword id="KW-0997">Cell inner membrane</keyword>
<keyword id="KW-1003">Cell membrane</keyword>
<keyword id="KW-0472">Membrane</keyword>
<keyword id="KW-0812">Transmembrane</keyword>
<keyword id="KW-1133">Transmembrane helix</keyword>
<organism>
    <name type="scientific">Escherichia coli O17:K52:H18 (strain UMN026 / ExPEC)</name>
    <dbReference type="NCBI Taxonomy" id="585056"/>
    <lineage>
        <taxon>Bacteria</taxon>
        <taxon>Pseudomonadati</taxon>
        <taxon>Pseudomonadota</taxon>
        <taxon>Gammaproteobacteria</taxon>
        <taxon>Enterobacterales</taxon>
        <taxon>Enterobacteriaceae</taxon>
        <taxon>Escherichia</taxon>
    </lineage>
</organism>
<protein>
    <recommendedName>
        <fullName evidence="1">Protein PsiE</fullName>
    </recommendedName>
</protein>
<reference key="1">
    <citation type="journal article" date="2009" name="PLoS Genet.">
        <title>Organised genome dynamics in the Escherichia coli species results in highly diverse adaptive paths.</title>
        <authorList>
            <person name="Touchon M."/>
            <person name="Hoede C."/>
            <person name="Tenaillon O."/>
            <person name="Barbe V."/>
            <person name="Baeriswyl S."/>
            <person name="Bidet P."/>
            <person name="Bingen E."/>
            <person name="Bonacorsi S."/>
            <person name="Bouchier C."/>
            <person name="Bouvet O."/>
            <person name="Calteau A."/>
            <person name="Chiapello H."/>
            <person name="Clermont O."/>
            <person name="Cruveiller S."/>
            <person name="Danchin A."/>
            <person name="Diard M."/>
            <person name="Dossat C."/>
            <person name="Karoui M.E."/>
            <person name="Frapy E."/>
            <person name="Garry L."/>
            <person name="Ghigo J.M."/>
            <person name="Gilles A.M."/>
            <person name="Johnson J."/>
            <person name="Le Bouguenec C."/>
            <person name="Lescat M."/>
            <person name="Mangenot S."/>
            <person name="Martinez-Jehanne V."/>
            <person name="Matic I."/>
            <person name="Nassif X."/>
            <person name="Oztas S."/>
            <person name="Petit M.A."/>
            <person name="Pichon C."/>
            <person name="Rouy Z."/>
            <person name="Ruf C.S."/>
            <person name="Schneider D."/>
            <person name="Tourret J."/>
            <person name="Vacherie B."/>
            <person name="Vallenet D."/>
            <person name="Medigue C."/>
            <person name="Rocha E.P.C."/>
            <person name="Denamur E."/>
        </authorList>
    </citation>
    <scope>NUCLEOTIDE SEQUENCE [LARGE SCALE GENOMIC DNA]</scope>
    <source>
        <strain>UMN026 / ExPEC</strain>
    </source>
</reference>
<evidence type="ECO:0000255" key="1">
    <source>
        <dbReference type="HAMAP-Rule" id="MF_01048"/>
    </source>
</evidence>
<name>PSIE_ECOLU</name>
<feature type="chain" id="PRO_1000136212" description="Protein PsiE">
    <location>
        <begin position="1"/>
        <end position="136"/>
    </location>
</feature>
<feature type="transmembrane region" description="Helical" evidence="1">
    <location>
        <begin position="15"/>
        <end position="35"/>
    </location>
</feature>
<feature type="transmembrane region" description="Helical" evidence="1">
    <location>
        <begin position="55"/>
        <end position="75"/>
    </location>
</feature>
<feature type="transmembrane region" description="Helical" evidence="1">
    <location>
        <begin position="82"/>
        <end position="102"/>
    </location>
</feature>
<feature type="transmembrane region" description="Helical" evidence="1">
    <location>
        <begin position="108"/>
        <end position="128"/>
    </location>
</feature>
<gene>
    <name evidence="1" type="primary">psiE</name>
    <name type="ordered locus">ECUMN_4565</name>
</gene>
<proteinExistence type="inferred from homology"/>